<proteinExistence type="inferred from homology"/>
<reference key="1">
    <citation type="submission" date="2008-06" db="EMBL/GenBank/DDBJ databases">
        <title>Complete sequence of Pelodictyon phaeoclathratiforme BU-1.</title>
        <authorList>
            <consortium name="US DOE Joint Genome Institute"/>
            <person name="Lucas S."/>
            <person name="Copeland A."/>
            <person name="Lapidus A."/>
            <person name="Glavina del Rio T."/>
            <person name="Dalin E."/>
            <person name="Tice H."/>
            <person name="Bruce D."/>
            <person name="Goodwin L."/>
            <person name="Pitluck S."/>
            <person name="Schmutz J."/>
            <person name="Larimer F."/>
            <person name="Land M."/>
            <person name="Hauser L."/>
            <person name="Kyrpides N."/>
            <person name="Mikhailova N."/>
            <person name="Liu Z."/>
            <person name="Li T."/>
            <person name="Zhao F."/>
            <person name="Overmann J."/>
            <person name="Bryant D.A."/>
            <person name="Richardson P."/>
        </authorList>
    </citation>
    <scope>NUCLEOTIDE SEQUENCE [LARGE SCALE GENOMIC DNA]</scope>
    <source>
        <strain>DSM 5477 / BU-1</strain>
    </source>
</reference>
<gene>
    <name evidence="1" type="primary">queF</name>
    <name type="ordered locus">Ppha_0685</name>
</gene>
<organism>
    <name type="scientific">Pelodictyon phaeoclathratiforme (strain DSM 5477 / BU-1)</name>
    <dbReference type="NCBI Taxonomy" id="324925"/>
    <lineage>
        <taxon>Bacteria</taxon>
        <taxon>Pseudomonadati</taxon>
        <taxon>Chlorobiota</taxon>
        <taxon>Chlorobiia</taxon>
        <taxon>Chlorobiales</taxon>
        <taxon>Chlorobiaceae</taxon>
        <taxon>Chlorobium/Pelodictyon group</taxon>
        <taxon>Pelodictyon</taxon>
    </lineage>
</organism>
<protein>
    <recommendedName>
        <fullName evidence="1">NADPH-dependent 7-cyano-7-deazaguanine reductase</fullName>
        <ecNumber evidence="1">1.7.1.13</ecNumber>
    </recommendedName>
    <alternativeName>
        <fullName evidence="1">7-cyano-7-carbaguanine reductase</fullName>
    </alternativeName>
    <alternativeName>
        <fullName evidence="1">NADPH-dependent nitrile oxidoreductase</fullName>
    </alternativeName>
    <alternativeName>
        <fullName evidence="1">PreQ(0) reductase</fullName>
    </alternativeName>
</protein>
<accession>B4SDY9</accession>
<sequence>MKKDLLELFDNSFPDRDYTIEIVNAEFTSVCPKTGLPDFGTITIRYVPDKSCIELKSLKYYFLEFRNAGIFYENITNRILDDLVTLLQPRSLSVITEWRARGGITETVSVNYSQTL</sequence>
<comment type="function">
    <text evidence="1">Catalyzes the NADPH-dependent reduction of 7-cyano-7-deazaguanine (preQ0) to 7-aminomethyl-7-deazaguanine (preQ1).</text>
</comment>
<comment type="catalytic activity">
    <reaction evidence="1">
        <text>7-aminomethyl-7-carbaguanine + 2 NADP(+) = 7-cyano-7-deazaguanine + 2 NADPH + 3 H(+)</text>
        <dbReference type="Rhea" id="RHEA:13409"/>
        <dbReference type="ChEBI" id="CHEBI:15378"/>
        <dbReference type="ChEBI" id="CHEBI:45075"/>
        <dbReference type="ChEBI" id="CHEBI:57783"/>
        <dbReference type="ChEBI" id="CHEBI:58349"/>
        <dbReference type="ChEBI" id="CHEBI:58703"/>
        <dbReference type="EC" id="1.7.1.13"/>
    </reaction>
</comment>
<comment type="pathway">
    <text evidence="1">tRNA modification; tRNA-queuosine biosynthesis.</text>
</comment>
<comment type="subcellular location">
    <subcellularLocation>
        <location evidence="1">Cytoplasm</location>
    </subcellularLocation>
</comment>
<comment type="similarity">
    <text evidence="1">Belongs to the GTP cyclohydrolase I family. QueF type 1 subfamily.</text>
</comment>
<feature type="chain" id="PRO_1000134307" description="NADPH-dependent 7-cyano-7-deazaguanine reductase">
    <location>
        <begin position="1"/>
        <end position="116"/>
    </location>
</feature>
<feature type="active site" description="Thioimide intermediate" evidence="1">
    <location>
        <position position="31"/>
    </location>
</feature>
<feature type="active site" description="Proton donor" evidence="1">
    <location>
        <position position="38"/>
    </location>
</feature>
<feature type="binding site" evidence="1">
    <location>
        <begin position="53"/>
        <end position="55"/>
    </location>
    <ligand>
        <name>substrate</name>
    </ligand>
</feature>
<feature type="binding site" evidence="1">
    <location>
        <begin position="72"/>
        <end position="73"/>
    </location>
    <ligand>
        <name>substrate</name>
    </ligand>
</feature>
<evidence type="ECO:0000255" key="1">
    <source>
        <dbReference type="HAMAP-Rule" id="MF_00818"/>
    </source>
</evidence>
<name>QUEF_PELPB</name>
<dbReference type="EC" id="1.7.1.13" evidence="1"/>
<dbReference type="EMBL" id="CP001110">
    <property type="protein sequence ID" value="ACF42980.1"/>
    <property type="molecule type" value="Genomic_DNA"/>
</dbReference>
<dbReference type="RefSeq" id="WP_012507475.1">
    <property type="nucleotide sequence ID" value="NC_011060.1"/>
</dbReference>
<dbReference type="SMR" id="B4SDY9"/>
<dbReference type="STRING" id="324925.Ppha_0685"/>
<dbReference type="KEGG" id="pph:Ppha_0685"/>
<dbReference type="eggNOG" id="COG0780">
    <property type="taxonomic scope" value="Bacteria"/>
</dbReference>
<dbReference type="HOGENOM" id="CLU_102489_1_0_10"/>
<dbReference type="OrthoDB" id="9795077at2"/>
<dbReference type="UniPathway" id="UPA00392"/>
<dbReference type="Proteomes" id="UP000002724">
    <property type="component" value="Chromosome"/>
</dbReference>
<dbReference type="GO" id="GO:0005737">
    <property type="term" value="C:cytoplasm"/>
    <property type="evidence" value="ECO:0007669"/>
    <property type="project" value="UniProtKB-SubCell"/>
</dbReference>
<dbReference type="GO" id="GO:0033739">
    <property type="term" value="F:preQ1 synthase activity"/>
    <property type="evidence" value="ECO:0007669"/>
    <property type="project" value="UniProtKB-UniRule"/>
</dbReference>
<dbReference type="GO" id="GO:0008616">
    <property type="term" value="P:queuosine biosynthetic process"/>
    <property type="evidence" value="ECO:0007669"/>
    <property type="project" value="UniProtKB-UniRule"/>
</dbReference>
<dbReference type="GO" id="GO:0006400">
    <property type="term" value="P:tRNA modification"/>
    <property type="evidence" value="ECO:0007669"/>
    <property type="project" value="UniProtKB-UniRule"/>
</dbReference>
<dbReference type="Gene3D" id="3.30.1130.10">
    <property type="match status" value="1"/>
</dbReference>
<dbReference type="HAMAP" id="MF_00818">
    <property type="entry name" value="QueF_type1"/>
    <property type="match status" value="1"/>
</dbReference>
<dbReference type="InterPro" id="IPR043133">
    <property type="entry name" value="GTP-CH-I_C/QueF"/>
</dbReference>
<dbReference type="InterPro" id="IPR050084">
    <property type="entry name" value="NADPH_dep_7-cyano-7-deazaG_red"/>
</dbReference>
<dbReference type="InterPro" id="IPR029500">
    <property type="entry name" value="QueF"/>
</dbReference>
<dbReference type="InterPro" id="IPR016856">
    <property type="entry name" value="QueF_type1"/>
</dbReference>
<dbReference type="NCBIfam" id="TIGR03139">
    <property type="entry name" value="QueF-II"/>
    <property type="match status" value="1"/>
</dbReference>
<dbReference type="PANTHER" id="PTHR34354">
    <property type="entry name" value="NADPH-DEPENDENT 7-CYANO-7-DEAZAGUANINE REDUCTASE"/>
    <property type="match status" value="1"/>
</dbReference>
<dbReference type="PANTHER" id="PTHR34354:SF1">
    <property type="entry name" value="NADPH-DEPENDENT 7-CYANO-7-DEAZAGUANINE REDUCTASE"/>
    <property type="match status" value="1"/>
</dbReference>
<dbReference type="Pfam" id="PF14489">
    <property type="entry name" value="QueF"/>
    <property type="match status" value="1"/>
</dbReference>
<dbReference type="PIRSF" id="PIRSF027377">
    <property type="entry name" value="Nitrile_oxidored_QueF"/>
    <property type="match status" value="1"/>
</dbReference>
<dbReference type="SUPFAM" id="SSF55620">
    <property type="entry name" value="Tetrahydrobiopterin biosynthesis enzymes-like"/>
    <property type="match status" value="1"/>
</dbReference>
<keyword id="KW-0963">Cytoplasm</keyword>
<keyword id="KW-0521">NADP</keyword>
<keyword id="KW-0560">Oxidoreductase</keyword>
<keyword id="KW-0671">Queuosine biosynthesis</keyword>
<keyword id="KW-1185">Reference proteome</keyword>